<protein>
    <recommendedName>
        <fullName evidence="4">Pyriculol/pyriculariol biosynthesis cluster transcription factor 1</fullName>
    </recommendedName>
</protein>
<name>TRF1_PYRO7</name>
<evidence type="ECO:0000255" key="1">
    <source>
        <dbReference type="PROSITE-ProRule" id="PRU00227"/>
    </source>
</evidence>
<evidence type="ECO:0000256" key="2">
    <source>
        <dbReference type="SAM" id="MobiDB-lite"/>
    </source>
</evidence>
<evidence type="ECO:0000269" key="3">
    <source>
    </source>
</evidence>
<evidence type="ECO:0000303" key="4">
    <source>
    </source>
</evidence>
<evidence type="ECO:0000305" key="5"/>
<organism>
    <name type="scientific">Pyricularia oryzae (strain 70-15 / ATCC MYA-4617 / FGSC 8958)</name>
    <name type="common">Rice blast fungus</name>
    <name type="synonym">Magnaporthe oryzae</name>
    <dbReference type="NCBI Taxonomy" id="242507"/>
    <lineage>
        <taxon>Eukaryota</taxon>
        <taxon>Fungi</taxon>
        <taxon>Dikarya</taxon>
        <taxon>Ascomycota</taxon>
        <taxon>Pezizomycotina</taxon>
        <taxon>Sordariomycetes</taxon>
        <taxon>Sordariomycetidae</taxon>
        <taxon>Magnaporthales</taxon>
        <taxon>Pyriculariaceae</taxon>
        <taxon>Pyricularia</taxon>
    </lineage>
</organism>
<keyword id="KW-0238">DNA-binding</keyword>
<keyword id="KW-0479">Metal-binding</keyword>
<keyword id="KW-0539">Nucleus</keyword>
<keyword id="KW-1185">Reference proteome</keyword>
<keyword id="KW-0862">Zinc</keyword>
<accession>G4N2A1</accession>
<gene>
    <name evidence="4" type="primary">TRF1</name>
    <name type="ORF">MGG_04843</name>
</gene>
<sequence length="742" mass="83190">MSSAAASATAGSVTGKTPRILACVLCQHRKIKCDRSFPCANCQRANVQCTPSTPAPARKRRRPNQDLQERLARCEELLKEYAPDGKPDIARLTTKRSSLSQSPPKGEEPLPEWNRHGKLIHEDGSVRFVDSYMLSTIYDELRAMRDIIDHDESTPEDESSDYMTPDTNADLLFGGDTPQPAGNSMELQPSPGHIFRLWQVFLDRVNPLIKLVHVPSLQPYFVEATAGAPLPKNIEALLFSIYTLAAVSLSDAECTSILGYGREAALHRFSSGVRASLIRIGFLKTHDLTTLQALVHYLISLQGRYNRHAAWVLNGVVIRIAQKMGIHRDGTMLGLPPFETEMRRRLWFQILSMEFKTALMSGLGHSLLPRVWDTQEPKNVNDADLHPSATEPVKDREGPTEMIFVLITNKVARFIVESPGIEPIFLYHDEKVKKIPGAPSEEKIKEFRGLIDGLSKSLLELTDKYCDPAAGPLHQYTIEFQDIIMQRIRESLEPGDATIETHIDHMFKMAVESFESTVVSYRNSCKVAYLWFLRLQFHNDLFTFLAGQLSQRPSGPLVDRAWETVENILPYHPELLKVNASKENLLLASLLVKGWNMREEYCSTQMGITLNTPPYIEHLRSVVPQDYVKSENSSPSALSRIPKANRMVTREAASDQLSVSGPMDPTFDEFIGNYLDGADWDVFSRINLENPAFPGVPATGITPQVNATASDILPSTRIDHTDPNQTSHQFAMYGIDPQSAWQ</sequence>
<dbReference type="EMBL" id="CM001233">
    <property type="protein sequence ID" value="EHA52513.1"/>
    <property type="status" value="ALT_SEQ"/>
    <property type="molecule type" value="Genomic_DNA"/>
</dbReference>
<dbReference type="RefSeq" id="XP_003712320.1">
    <property type="nucleotide sequence ID" value="XM_003712272.1"/>
</dbReference>
<dbReference type="GeneID" id="2675309"/>
<dbReference type="KEGG" id="mgr:MGG_04843"/>
<dbReference type="eggNOG" id="ENOG502QYWX">
    <property type="taxonomic scope" value="Eukaryota"/>
</dbReference>
<dbReference type="HOGENOM" id="CLU_004083_5_3_1"/>
<dbReference type="InParanoid" id="G4N2A1"/>
<dbReference type="OrthoDB" id="2269373at2759"/>
<dbReference type="PHI-base" id="PHI:5601"/>
<dbReference type="Proteomes" id="UP000009058">
    <property type="component" value="Chromosome 3"/>
</dbReference>
<dbReference type="GO" id="GO:0005634">
    <property type="term" value="C:nucleus"/>
    <property type="evidence" value="ECO:0007669"/>
    <property type="project" value="UniProtKB-SubCell"/>
</dbReference>
<dbReference type="GO" id="GO:0003677">
    <property type="term" value="F:DNA binding"/>
    <property type="evidence" value="ECO:0007669"/>
    <property type="project" value="UniProtKB-KW"/>
</dbReference>
<dbReference type="GO" id="GO:0000981">
    <property type="term" value="F:DNA-binding transcription factor activity, RNA polymerase II-specific"/>
    <property type="evidence" value="ECO:0007669"/>
    <property type="project" value="InterPro"/>
</dbReference>
<dbReference type="GO" id="GO:0008270">
    <property type="term" value="F:zinc ion binding"/>
    <property type="evidence" value="ECO:0007669"/>
    <property type="project" value="InterPro"/>
</dbReference>
<dbReference type="GO" id="GO:0006351">
    <property type="term" value="P:DNA-templated transcription"/>
    <property type="evidence" value="ECO:0007669"/>
    <property type="project" value="InterPro"/>
</dbReference>
<dbReference type="CDD" id="cd12148">
    <property type="entry name" value="fungal_TF_MHR"/>
    <property type="match status" value="1"/>
</dbReference>
<dbReference type="CDD" id="cd00067">
    <property type="entry name" value="GAL4"/>
    <property type="match status" value="1"/>
</dbReference>
<dbReference type="Gene3D" id="4.10.240.10">
    <property type="entry name" value="Zn(2)-C6 fungal-type DNA-binding domain"/>
    <property type="match status" value="1"/>
</dbReference>
<dbReference type="InterPro" id="IPR050613">
    <property type="entry name" value="Sec_Metabolite_Reg"/>
</dbReference>
<dbReference type="InterPro" id="IPR007219">
    <property type="entry name" value="Transcription_factor_dom_fun"/>
</dbReference>
<dbReference type="InterPro" id="IPR036864">
    <property type="entry name" value="Zn2-C6_fun-type_DNA-bd_sf"/>
</dbReference>
<dbReference type="InterPro" id="IPR001138">
    <property type="entry name" value="Zn2Cys6_DnaBD"/>
</dbReference>
<dbReference type="PANTHER" id="PTHR31001">
    <property type="entry name" value="UNCHARACTERIZED TRANSCRIPTIONAL REGULATORY PROTEIN"/>
    <property type="match status" value="1"/>
</dbReference>
<dbReference type="PANTHER" id="PTHR31001:SF85">
    <property type="entry name" value="ZN(II)2CYS6 TRANSCRIPTION FACTOR (EUROFUNG)"/>
    <property type="match status" value="1"/>
</dbReference>
<dbReference type="Pfam" id="PF04082">
    <property type="entry name" value="Fungal_trans"/>
    <property type="match status" value="1"/>
</dbReference>
<dbReference type="Pfam" id="PF00172">
    <property type="entry name" value="Zn_clus"/>
    <property type="match status" value="1"/>
</dbReference>
<dbReference type="SMART" id="SM00906">
    <property type="entry name" value="Fungal_trans"/>
    <property type="match status" value="1"/>
</dbReference>
<dbReference type="SMART" id="SM00066">
    <property type="entry name" value="GAL4"/>
    <property type="match status" value="1"/>
</dbReference>
<dbReference type="SUPFAM" id="SSF57701">
    <property type="entry name" value="Zn2/Cys6 DNA-binding domain"/>
    <property type="match status" value="1"/>
</dbReference>
<dbReference type="PROSITE" id="PS50048">
    <property type="entry name" value="ZN2_CY6_FUNGAL_2"/>
    <property type="match status" value="1"/>
</dbReference>
<proteinExistence type="inferred from homology"/>
<reference key="1">
    <citation type="journal article" date="2005" name="Nature">
        <title>The genome sequence of the rice blast fungus Magnaporthe grisea.</title>
        <authorList>
            <person name="Dean R.A."/>
            <person name="Talbot N.J."/>
            <person name="Ebbole D.J."/>
            <person name="Farman M.L."/>
            <person name="Mitchell T.K."/>
            <person name="Orbach M.J."/>
            <person name="Thon M.R."/>
            <person name="Kulkarni R."/>
            <person name="Xu J.-R."/>
            <person name="Pan H."/>
            <person name="Read N.D."/>
            <person name="Lee Y.-H."/>
            <person name="Carbone I."/>
            <person name="Brown D."/>
            <person name="Oh Y.Y."/>
            <person name="Donofrio N."/>
            <person name="Jeong J.S."/>
            <person name="Soanes D.M."/>
            <person name="Djonovic S."/>
            <person name="Kolomiets E."/>
            <person name="Rehmeyer C."/>
            <person name="Li W."/>
            <person name="Harding M."/>
            <person name="Kim S."/>
            <person name="Lebrun M.-H."/>
            <person name="Bohnert H."/>
            <person name="Coughlan S."/>
            <person name="Butler J."/>
            <person name="Calvo S.E."/>
            <person name="Ma L.-J."/>
            <person name="Nicol R."/>
            <person name="Purcell S."/>
            <person name="Nusbaum C."/>
            <person name="Galagan J.E."/>
            <person name="Birren B.W."/>
        </authorList>
    </citation>
    <scope>NUCLEOTIDE SEQUENCE [LARGE SCALE GENOMIC DNA]</scope>
    <source>
        <strain>70-15 / ATCC MYA-4617 / FGSC 8958</strain>
    </source>
</reference>
<reference key="2">
    <citation type="journal article" date="2017" name="Microbiology">
        <title>Unravelling the biosynthesis of pyriculol in the rice blast fungus Magnaporthe oryzae.</title>
        <authorList>
            <person name="Jacob S."/>
            <person name="Groetsch T."/>
            <person name="Foster A.J."/>
            <person name="Schueffler A."/>
            <person name="Rieger P.H."/>
            <person name="Sandjo L.P."/>
            <person name="Liermann J.C."/>
            <person name="Opatz T."/>
            <person name="Thines E."/>
        </authorList>
    </citation>
    <scope>IDENTIFICATION</scope>
    <scope>DISRUPTION PHENOTYPE</scope>
    <scope>FUNCTION</scope>
</reference>
<comment type="function">
    <text evidence="3">Transcriptional regulator; part of the gene cluster that mediates the biosynthesis of pyriculol and pyriculariol, two heptaketides that induce lesion formation upon application on rice leaves but are dispensable for pathogenicity (PubMed:27902426). With TRF2, negatively regulates the expression of the gene cluster and the subsequent pyriculol and pyriculariol production (PubMed:27902426).</text>
</comment>
<comment type="subcellular location">
    <subcellularLocation>
        <location evidence="1">Nucleus</location>
    </subcellularLocation>
</comment>
<comment type="disruption phenotype">
    <text evidence="3">Leads to increased expression of the pyriculol/pyriculariol biosynthesis cluster highly reducing polyketide synthase PKS19.</text>
</comment>
<comment type="sequence caution" evidence="5">
    <conflict type="erroneous gene model prediction">
        <sequence resource="EMBL-CDS" id="EHA52513"/>
    </conflict>
</comment>
<feature type="chain" id="PRO_0000446271" description="Pyriculol/pyriculariol biosynthesis cluster transcription factor 1">
    <location>
        <begin position="1"/>
        <end position="742"/>
    </location>
</feature>
<feature type="DNA-binding region" description="Zn(2)-C6 fungal-type" evidence="1">
    <location>
        <begin position="23"/>
        <end position="49"/>
    </location>
</feature>
<feature type="region of interest" description="Disordered" evidence="2">
    <location>
        <begin position="85"/>
        <end position="116"/>
    </location>
</feature>
<feature type="compositionally biased region" description="Basic and acidic residues" evidence="2">
    <location>
        <begin position="105"/>
        <end position="116"/>
    </location>
</feature>